<feature type="chain" id="PRO_0000273537" description="Protein ARABIDILLO 1">
    <location>
        <begin position="1"/>
        <end position="930"/>
    </location>
</feature>
<feature type="domain" description="F-box">
    <location>
        <begin position="44"/>
        <end position="90"/>
    </location>
</feature>
<feature type="repeat" description="ARM 1">
    <location>
        <begin position="172"/>
        <end position="212"/>
    </location>
</feature>
<feature type="repeat" description="ARM 2">
    <location>
        <begin position="244"/>
        <end position="285"/>
    </location>
</feature>
<feature type="repeat" description="ARM 3">
    <location>
        <begin position="379"/>
        <end position="418"/>
    </location>
</feature>
<feature type="repeat" description="ARM 4">
    <location>
        <begin position="428"/>
        <end position="467"/>
    </location>
</feature>
<feature type="repeat" description="ARM 5">
    <location>
        <begin position="469"/>
        <end position="508"/>
    </location>
</feature>
<feature type="repeat" description="ARM 6">
    <location>
        <begin position="510"/>
        <end position="552"/>
    </location>
</feature>
<feature type="repeat" description="ARM 7">
    <location>
        <begin position="554"/>
        <end position="594"/>
    </location>
</feature>
<feature type="repeat" description="ARM 8">
    <location>
        <begin position="600"/>
        <end position="639"/>
    </location>
</feature>
<feature type="repeat" description="ARM 9">
    <location>
        <begin position="641"/>
        <end position="683"/>
    </location>
</feature>
<feature type="repeat" description="ARM 10">
    <location>
        <begin position="685"/>
        <end position="724"/>
    </location>
</feature>
<feature type="repeat" description="ARM 11">
    <location>
        <begin position="726"/>
        <end position="766"/>
    </location>
</feature>
<feature type="repeat" description="ARM 12">
    <location>
        <begin position="790"/>
        <end position="831"/>
    </location>
</feature>
<feature type="repeat" description="ARM 13">
    <location>
        <begin position="835"/>
        <end position="875"/>
    </location>
</feature>
<feature type="short sequence motif" description="Nuclear localization signal" evidence="1">
    <location>
        <begin position="3"/>
        <end position="8"/>
    </location>
</feature>
<feature type="mutagenesis site" description="Prevents nuclear localization; when associated with A-6." evidence="1">
    <original>R</original>
    <variation>A</variation>
    <location>
        <position position="4"/>
    </location>
</feature>
<feature type="mutagenesis site" description="Prevents nuclear localization; when associated with A-4; A-7 or A-8." evidence="1">
    <original>R</original>
    <variation>A</variation>
    <location>
        <position position="6"/>
    </location>
</feature>
<feature type="mutagenesis site" description="Prevents nuclear localization; when associated with A-6 or A-8." evidence="1">
    <original>R</original>
    <variation>A</variation>
    <location>
        <position position="7"/>
    </location>
</feature>
<feature type="mutagenesis site" description="Prevents nuclear localization; when associated with A-6 or A-7." evidence="1">
    <original>K</original>
    <variation>A</variation>
    <location>
        <position position="8"/>
    </location>
</feature>
<evidence type="ECO:0000269" key="1">
    <source>
    </source>
</evidence>
<evidence type="ECO:0000269" key="2">
    <source>
    </source>
</evidence>
<evidence type="ECO:0000269" key="3">
    <source>
    </source>
</evidence>
<evidence type="ECO:0000305" key="4"/>
<dbReference type="EMBL" id="AC002388">
    <property type="protein sequence ID" value="AAC31834.1"/>
    <property type="molecule type" value="Genomic_DNA"/>
</dbReference>
<dbReference type="EMBL" id="CP002685">
    <property type="protein sequence ID" value="AEC10482.1"/>
    <property type="molecule type" value="Genomic_DNA"/>
</dbReference>
<dbReference type="EMBL" id="CP002685">
    <property type="protein sequence ID" value="ANM62877.1"/>
    <property type="molecule type" value="Genomic_DNA"/>
</dbReference>
<dbReference type="PIR" id="T00403">
    <property type="entry name" value="T00403"/>
</dbReference>
<dbReference type="SMR" id="O22161"/>
<dbReference type="FunCoup" id="O22161">
    <property type="interactions" value="1906"/>
</dbReference>
<dbReference type="STRING" id="3702.O22161"/>
<dbReference type="GlyGen" id="O22161">
    <property type="glycosylation" value="1 site"/>
</dbReference>
<dbReference type="PaxDb" id="3702-AT2G44900.1"/>
<dbReference type="ProteomicsDB" id="244863"/>
<dbReference type="EnsemblPlants" id="AT2G44900.1">
    <property type="protein sequence ID" value="AT2G44900.1"/>
    <property type="gene ID" value="AT2G44900"/>
</dbReference>
<dbReference type="EnsemblPlants" id="AT2G44900.2">
    <property type="protein sequence ID" value="AT2G44900.2"/>
    <property type="gene ID" value="AT2G44900"/>
</dbReference>
<dbReference type="GeneID" id="819099"/>
<dbReference type="Gramene" id="AT2G44900.1">
    <property type="protein sequence ID" value="AT2G44900.1"/>
    <property type="gene ID" value="AT2G44900"/>
</dbReference>
<dbReference type="Gramene" id="AT2G44900.2">
    <property type="protein sequence ID" value="AT2G44900.2"/>
    <property type="gene ID" value="AT2G44900"/>
</dbReference>
<dbReference type="KEGG" id="ath:AT2G44900"/>
<dbReference type="Araport" id="AT2G44900"/>
<dbReference type="TAIR" id="AT2G44900">
    <property type="gene designation" value="ARABIDILLO-1"/>
</dbReference>
<dbReference type="eggNOG" id="ENOG502SAGE">
    <property type="taxonomic scope" value="Eukaryota"/>
</dbReference>
<dbReference type="HOGENOM" id="CLU_018807_0_0_1"/>
<dbReference type="InParanoid" id="O22161"/>
<dbReference type="OMA" id="MMSWLEW"/>
<dbReference type="OrthoDB" id="7537227at2759"/>
<dbReference type="PhylomeDB" id="O22161"/>
<dbReference type="PRO" id="PR:O22161"/>
<dbReference type="Proteomes" id="UP000006548">
    <property type="component" value="Chromosome 2"/>
</dbReference>
<dbReference type="ExpressionAtlas" id="O22161">
    <property type="expression patterns" value="baseline and differential"/>
</dbReference>
<dbReference type="GO" id="GO:0005634">
    <property type="term" value="C:nucleus"/>
    <property type="evidence" value="ECO:0000314"/>
    <property type="project" value="TAIR"/>
</dbReference>
<dbReference type="GO" id="GO:0048527">
    <property type="term" value="P:lateral root development"/>
    <property type="evidence" value="ECO:0000315"/>
    <property type="project" value="TAIR"/>
</dbReference>
<dbReference type="CDD" id="cd22155">
    <property type="entry name" value="F-box_AtADLO1-like"/>
    <property type="match status" value="1"/>
</dbReference>
<dbReference type="FunFam" id="1.25.10.10:FF:001918">
    <property type="entry name" value="Protein ARABIDILLO 2"/>
    <property type="match status" value="1"/>
</dbReference>
<dbReference type="Gene3D" id="1.25.10.10">
    <property type="entry name" value="Leucine-rich Repeat Variant"/>
    <property type="match status" value="2"/>
</dbReference>
<dbReference type="Gene3D" id="3.80.10.10">
    <property type="entry name" value="Ribonuclease Inhibitor"/>
    <property type="match status" value="1"/>
</dbReference>
<dbReference type="InterPro" id="IPR011989">
    <property type="entry name" value="ARM-like"/>
</dbReference>
<dbReference type="InterPro" id="IPR016024">
    <property type="entry name" value="ARM-type_fold"/>
</dbReference>
<dbReference type="InterPro" id="IPR000225">
    <property type="entry name" value="Armadillo"/>
</dbReference>
<dbReference type="InterPro" id="IPR001810">
    <property type="entry name" value="F-box_dom"/>
</dbReference>
<dbReference type="InterPro" id="IPR006553">
    <property type="entry name" value="Leu-rich_rpt_Cys-con_subtyp"/>
</dbReference>
<dbReference type="InterPro" id="IPR032675">
    <property type="entry name" value="LRR_dom_sf"/>
</dbReference>
<dbReference type="PANTHER" id="PTHR46976">
    <property type="entry name" value="PROTEIN ARABIDILLO 1"/>
    <property type="match status" value="1"/>
</dbReference>
<dbReference type="PANTHER" id="PTHR46976:SF1">
    <property type="entry name" value="PROTEIN ARABIDILLO 1"/>
    <property type="match status" value="1"/>
</dbReference>
<dbReference type="Pfam" id="PF00514">
    <property type="entry name" value="Arm"/>
    <property type="match status" value="7"/>
</dbReference>
<dbReference type="Pfam" id="PF12937">
    <property type="entry name" value="F-box-like"/>
    <property type="match status" value="1"/>
</dbReference>
<dbReference type="SMART" id="SM00185">
    <property type="entry name" value="ARM"/>
    <property type="match status" value="8"/>
</dbReference>
<dbReference type="SMART" id="SM00256">
    <property type="entry name" value="FBOX"/>
    <property type="match status" value="1"/>
</dbReference>
<dbReference type="SMART" id="SM00367">
    <property type="entry name" value="LRR_CC"/>
    <property type="match status" value="2"/>
</dbReference>
<dbReference type="SUPFAM" id="SSF48371">
    <property type="entry name" value="ARM repeat"/>
    <property type="match status" value="1"/>
</dbReference>
<dbReference type="SUPFAM" id="SSF52047">
    <property type="entry name" value="RNI-like"/>
    <property type="match status" value="1"/>
</dbReference>
<dbReference type="PROSITE" id="PS50176">
    <property type="entry name" value="ARM_REPEAT"/>
    <property type="match status" value="7"/>
</dbReference>
<reference key="1">
    <citation type="journal article" date="1999" name="Nature">
        <title>Sequence and analysis of chromosome 2 of the plant Arabidopsis thaliana.</title>
        <authorList>
            <person name="Lin X."/>
            <person name="Kaul S."/>
            <person name="Rounsley S.D."/>
            <person name="Shea T.P."/>
            <person name="Benito M.-I."/>
            <person name="Town C.D."/>
            <person name="Fujii C.Y."/>
            <person name="Mason T.M."/>
            <person name="Bowman C.L."/>
            <person name="Barnstead M.E."/>
            <person name="Feldblyum T.V."/>
            <person name="Buell C.R."/>
            <person name="Ketchum K.A."/>
            <person name="Lee J.J."/>
            <person name="Ronning C.M."/>
            <person name="Koo H.L."/>
            <person name="Moffat K.S."/>
            <person name="Cronin L.A."/>
            <person name="Shen M."/>
            <person name="Pai G."/>
            <person name="Van Aken S."/>
            <person name="Umayam L."/>
            <person name="Tallon L.J."/>
            <person name="Gill J.E."/>
            <person name="Adams M.D."/>
            <person name="Carrera A.J."/>
            <person name="Creasy T.H."/>
            <person name="Goodman H.M."/>
            <person name="Somerville C.R."/>
            <person name="Copenhaver G.P."/>
            <person name="Preuss D."/>
            <person name="Nierman W.C."/>
            <person name="White O."/>
            <person name="Eisen J.A."/>
            <person name="Salzberg S.L."/>
            <person name="Fraser C.M."/>
            <person name="Venter J.C."/>
        </authorList>
    </citation>
    <scope>NUCLEOTIDE SEQUENCE [LARGE SCALE GENOMIC DNA]</scope>
    <source>
        <strain>cv. Columbia</strain>
    </source>
</reference>
<reference key="2">
    <citation type="journal article" date="2017" name="Plant J.">
        <title>Araport11: a complete reannotation of the Arabidopsis thaliana reference genome.</title>
        <authorList>
            <person name="Cheng C.Y."/>
            <person name="Krishnakumar V."/>
            <person name="Chan A.P."/>
            <person name="Thibaud-Nissen F."/>
            <person name="Schobel S."/>
            <person name="Town C.D."/>
        </authorList>
    </citation>
    <scope>GENOME REANNOTATION</scope>
    <source>
        <strain>cv. Columbia</strain>
    </source>
</reference>
<reference key="3">
    <citation type="journal article" date="2000" name="Trends Plant Sci.">
        <title>F-box proteins in Arabidopsis.</title>
        <authorList>
            <person name="Xiao W."/>
            <person name="Jang J.-C."/>
        </authorList>
    </citation>
    <scope>GENE FAMILY</scope>
    <scope>NOMENCLATURE</scope>
</reference>
<reference key="4">
    <citation type="journal article" date="2006" name="Proc. Natl. Acad. Sci. U.S.A.">
        <title>Armadillo-related proteins promote lateral root development in Arabidopsis.</title>
        <authorList>
            <person name="Coates J.C."/>
            <person name="Laplaze L."/>
            <person name="Haseloff J."/>
        </authorList>
    </citation>
    <scope>FUNCTION</scope>
    <scope>SUBCELLULAR LOCATION</scope>
    <scope>TISSUE SPECIFICITY</scope>
    <scope>DEVELOPMENTAL STAGE</scope>
    <scope>NUCLEAR LOCALIZATION SIGNAL</scope>
    <scope>MUTAGENESIS OF ARG-4; ARG-6; ARG-7 AND LYS-8</scope>
</reference>
<reference key="5">
    <citation type="journal article" date="2010" name="J. Mol. Biol.">
        <title>PAH-domain-specific interactions of the Arabidopsis transcription coregulator SIN3-LIKE1 (SNL1) with telomere-binding protein 1 and ALWAYS EARLY2 Myb-DNA binding factors.</title>
        <authorList>
            <person name="Bowen A.J."/>
            <person name="Gonzalez D."/>
            <person name="Mullins J.G."/>
            <person name="Bhatt A.M."/>
            <person name="Martinez A."/>
            <person name="Conlan R.S."/>
        </authorList>
    </citation>
    <scope>INTERACTION WITH SNL1</scope>
</reference>
<reference key="6">
    <citation type="journal article" date="2014" name="New Phytol.">
        <title>AtMYB93 is a novel negative regulator of lateral root development in Arabidopsis.</title>
        <authorList>
            <person name="Gibbs D.J."/>
            <person name="Voss U."/>
            <person name="Harding S.A."/>
            <person name="Fannon J."/>
            <person name="Moody L.A."/>
            <person name="Yamada E."/>
            <person name="Swarup K."/>
            <person name="Nibau C."/>
            <person name="Bassel G.W."/>
            <person name="Choudhary A."/>
            <person name="Lavenus J."/>
            <person name="Bradshaw S.J."/>
            <person name="Stekel D.J."/>
            <person name="Bennett M.J."/>
            <person name="Coates J.C."/>
        </authorList>
    </citation>
    <scope>INTERACTION WITH MYB53; MYB92 AND MYB93</scope>
</reference>
<gene>
    <name type="primary">FBX5</name>
    <name type="ordered locus">At2g44900</name>
    <name type="ORF">T13E15.9</name>
</gene>
<comment type="function">
    <text evidence="1">Promotes lateral root initiation and development, independently of auxin (IAA) and abscisis acid (ABA).</text>
</comment>
<comment type="subunit">
    <text evidence="2 3">Interacts with SNL1 (PubMed:19962994). Interacts with MYB53, MYB92 and MYB93 (PubMed:24902892).</text>
</comment>
<comment type="subcellular location">
    <subcellularLocation>
        <location evidence="1">Nucleus</location>
    </subcellularLocation>
</comment>
<comment type="tissue specificity">
    <text evidence="1">Expressed ubiquitously, with higher levels in root tip, pericycle and vasculature.</text>
</comment>
<comment type="developmental stage">
    <text evidence="1">Present in lateral root primordia.</text>
</comment>
<comment type="similarity">
    <text evidence="4">Belongs to the beta-catenin family.</text>
</comment>
<name>ADLO1_ARATH</name>
<sequence length="930" mass="100642">MSRRVRRKLEEEKGKDKVVVLPSYPETSISNEEDLVAPELLHGFVDWISLPYDTVLQLFTCLNYRDRASLASTCKTWRCLGASSCLWTSLDLRPHKFDASMAASLASRCVNLHYLRFRGVESADSLIHLKARNLIEVSGDYCKKITDATLSMIVARHEALESLQLGPDFCERITSDAIKAVAFCCPKLKKLRLSGIRDVTSEAIEALAKHCPQLNDLGFLDCLNIDEEALGKVVSVRYLSVAGTSNIKWSIASNNWDKLPKLTGLDVSRTDIGPTAVSRFLTSSQSLKVLCALNCHVLEEDESLISYNRFKGKVLLALFTNVFDGLASIFADNTKKPKDIFAYWRELMKTTKDKTINDFIHWIEWIISHTLLRTAECNPEGLDDFWLNEGAALLLNLMQSSQEDVQERSATGLATFVVVDDENASIDCGRAEAVMKDGGIRLLLELAKSWREGLQSEAAKAIANLSVNANIAKSVAEEGGIKILAGLAKSMNRLVAEEAAGGLWNLSVGEEHKNAIAQAGGVKALVDLIFRWPNGCDGVLERAAGALANLAADDKCSMEVAKAGGVHALVMLARNCKYEGVQEQAARALANLAAHGDSNNNNAAVGQEAGALEALVQLTKSPHEGVRQEAAGALWNLSFDDKNRESISVAGGVEALVALAQSCSNASTGLQERAAGALWGLSVSEANSVAIGREGGVPPLIALARSEAEDVHETAAGALWNLAFNPGNALRIVEEGGVPALVHLCSSSVSKMARFMAALALAYMFDGRMDEYALMIGTSSSESTSKNISLDGARNMALKHIEAFVLSFIDPHIFESPVVSSTPTMLAQVTERARIQEAGHLRCSGAEIGRFVTMLRNPDSTLKACAAFALLQFTIPGGRHAMHHVSLMQNGGESRFLRSAAASAKTPREAKIFTKILLRNLEHHQAESSI</sequence>
<accession>O22161</accession>
<proteinExistence type="evidence at protein level"/>
<protein>
    <recommendedName>
        <fullName>Protein ARABIDILLO 1</fullName>
    </recommendedName>
    <alternativeName>
        <fullName>F-box only protein 5</fullName>
    </alternativeName>
</protein>
<keyword id="KW-0539">Nucleus</keyword>
<keyword id="KW-1185">Reference proteome</keyword>
<keyword id="KW-0677">Repeat</keyword>
<organism>
    <name type="scientific">Arabidopsis thaliana</name>
    <name type="common">Mouse-ear cress</name>
    <dbReference type="NCBI Taxonomy" id="3702"/>
    <lineage>
        <taxon>Eukaryota</taxon>
        <taxon>Viridiplantae</taxon>
        <taxon>Streptophyta</taxon>
        <taxon>Embryophyta</taxon>
        <taxon>Tracheophyta</taxon>
        <taxon>Spermatophyta</taxon>
        <taxon>Magnoliopsida</taxon>
        <taxon>eudicotyledons</taxon>
        <taxon>Gunneridae</taxon>
        <taxon>Pentapetalae</taxon>
        <taxon>rosids</taxon>
        <taxon>malvids</taxon>
        <taxon>Brassicales</taxon>
        <taxon>Brassicaceae</taxon>
        <taxon>Camelineae</taxon>
        <taxon>Arabidopsis</taxon>
    </lineage>
</organism>